<dbReference type="EMBL" id="X74481">
    <property type="protein sequence ID" value="CAA52586.1"/>
    <property type="molecule type" value="Genomic_DNA"/>
</dbReference>
<dbReference type="PIR" id="S36574">
    <property type="entry name" value="S36574"/>
</dbReference>
<dbReference type="SMR" id="P36831"/>
<dbReference type="Proteomes" id="UP000008692">
    <property type="component" value="Genome"/>
</dbReference>
<dbReference type="GO" id="GO:0030430">
    <property type="term" value="C:host cell cytoplasm"/>
    <property type="evidence" value="ECO:0007669"/>
    <property type="project" value="UniProtKB-SubCell"/>
</dbReference>
<dbReference type="GO" id="GO:0042025">
    <property type="term" value="C:host cell nucleus"/>
    <property type="evidence" value="ECO:0007669"/>
    <property type="project" value="UniProtKB-SubCell"/>
</dbReference>
<dbReference type="GO" id="GO:0003677">
    <property type="term" value="F:DNA binding"/>
    <property type="evidence" value="ECO:0007669"/>
    <property type="project" value="UniProtKB-UniRule"/>
</dbReference>
<dbReference type="GO" id="GO:0003700">
    <property type="term" value="F:DNA-binding transcription factor activity"/>
    <property type="evidence" value="ECO:0007669"/>
    <property type="project" value="UniProtKB-UniRule"/>
</dbReference>
<dbReference type="GO" id="GO:0019904">
    <property type="term" value="F:protein domain specific binding"/>
    <property type="evidence" value="ECO:0007669"/>
    <property type="project" value="UniProtKB-UniRule"/>
</dbReference>
<dbReference type="GO" id="GO:0008270">
    <property type="term" value="F:zinc ion binding"/>
    <property type="evidence" value="ECO:0007669"/>
    <property type="project" value="UniProtKB-KW"/>
</dbReference>
<dbReference type="GO" id="GO:0006351">
    <property type="term" value="P:DNA-templated transcription"/>
    <property type="evidence" value="ECO:0007669"/>
    <property type="project" value="UniProtKB-UniRule"/>
</dbReference>
<dbReference type="GO" id="GO:0039645">
    <property type="term" value="P:symbiont-mediated perturbation of host cell cycle G1/S transition checkpoint"/>
    <property type="evidence" value="ECO:0007669"/>
    <property type="project" value="UniProtKB-UniRule"/>
</dbReference>
<dbReference type="GO" id="GO:0052170">
    <property type="term" value="P:symbiont-mediated suppression of host innate immune response"/>
    <property type="evidence" value="ECO:0007669"/>
    <property type="project" value="UniProtKB-KW"/>
</dbReference>
<dbReference type="GO" id="GO:0039502">
    <property type="term" value="P:symbiont-mediated suppression of host type I interferon-mediated signaling pathway"/>
    <property type="evidence" value="ECO:0007669"/>
    <property type="project" value="UniProtKB-UniRule"/>
</dbReference>
<dbReference type="Gene3D" id="3.30.160.330">
    <property type="match status" value="1"/>
</dbReference>
<dbReference type="HAMAP" id="MF_04004">
    <property type="entry name" value="PPV_E7"/>
    <property type="match status" value="1"/>
</dbReference>
<dbReference type="InterPro" id="IPR000148">
    <property type="entry name" value="Papilloma_E7"/>
</dbReference>
<dbReference type="Pfam" id="PF00527">
    <property type="entry name" value="E7"/>
    <property type="match status" value="1"/>
</dbReference>
<dbReference type="PIRSF" id="PIRSF003407">
    <property type="entry name" value="Papvi_E7"/>
    <property type="match status" value="1"/>
</dbReference>
<dbReference type="SUPFAM" id="SSF161234">
    <property type="entry name" value="E7 C-terminal domain-like"/>
    <property type="match status" value="1"/>
</dbReference>
<feature type="chain" id="PRO_0000133448" description="Protein E7">
    <location>
        <begin position="1"/>
        <end position="99"/>
    </location>
</feature>
<feature type="zinc finger region" evidence="1">
    <location>
        <begin position="60"/>
        <end position="96"/>
    </location>
</feature>
<feature type="region of interest" description="E7 terminal domain" evidence="1">
    <location>
        <begin position="1"/>
        <end position="42"/>
    </location>
</feature>
<feature type="region of interest" description="Disordered" evidence="2">
    <location>
        <begin position="26"/>
        <end position="47"/>
    </location>
</feature>
<feature type="short sequence motif" description="LXCXE motif; interaction with host RB1 and TMEM173/STING" evidence="1">
    <location>
        <begin position="22"/>
        <end position="26"/>
    </location>
</feature>
<feature type="short sequence motif" description="Nuclear export signal" evidence="1">
    <location>
        <begin position="78"/>
        <end position="86"/>
    </location>
</feature>
<sequence>MRGDKATIKDYILDLQPETTDLHCYEQLGDSSDEEDTDGVDRPDGQAEQATSNYYIVTYCHSCDSTLRLCIHSTATDLRTLQQMLLGTLQVVCPGCARL</sequence>
<name>VE7_HPV52</name>
<protein>
    <recommendedName>
        <fullName evidence="1">Protein E7</fullName>
    </recommendedName>
</protein>
<keyword id="KW-0010">Activator</keyword>
<keyword id="KW-0238">DNA-binding</keyword>
<keyword id="KW-0244">Early protein</keyword>
<keyword id="KW-1078">G1/S host cell cycle checkpoint dysregulation by virus</keyword>
<keyword id="KW-1035">Host cytoplasm</keyword>
<keyword id="KW-1048">Host nucleus</keyword>
<keyword id="KW-0945">Host-virus interaction</keyword>
<keyword id="KW-1090">Inhibition of host innate immune response by virus</keyword>
<keyword id="KW-1114">Inhibition of host interferon signaling pathway by virus</keyword>
<keyword id="KW-0922">Interferon antiviral system evasion</keyword>
<keyword id="KW-0479">Metal-binding</keyword>
<keyword id="KW-1121">Modulation of host cell cycle by virus</keyword>
<keyword id="KW-0553">Oncogene</keyword>
<keyword id="KW-0804">Transcription</keyword>
<keyword id="KW-0805">Transcription regulation</keyword>
<keyword id="KW-0899">Viral immunoevasion</keyword>
<keyword id="KW-0862">Zinc</keyword>
<keyword id="KW-0863">Zinc-finger</keyword>
<gene>
    <name evidence="1" type="primary">E7</name>
</gene>
<evidence type="ECO:0000255" key="1">
    <source>
        <dbReference type="HAMAP-Rule" id="MF_04004"/>
    </source>
</evidence>
<evidence type="ECO:0000256" key="2">
    <source>
        <dbReference type="SAM" id="MobiDB-lite"/>
    </source>
</evidence>
<proteinExistence type="inferred from homology"/>
<accession>P36831</accession>
<comment type="function">
    <text evidence="1">Plays a role in viral genome replication by driving entry of quiescent cells into the cell cycle. Stimulation of progression from G1 to S phase allows the virus to efficiently use the cellular DNA replicating machinery to achieve viral genome replication. E7 protein has both transforming and trans-activating activities. Induces the disassembly of the E2F1 transcription factor from RB1, with subsequent transcriptional activation of E2F1-regulated S-phase genes. Interferes with host histone deacetylation mediated by HDAC1 and HDAC2, leading to transcription activation. Also plays a role in the inhibition of both antiviral and antiproliferative functions of host interferon alpha. Interaction with host TMEM173/STING impairs the ability of TMEM173/STING to sense cytosolic DNA and promote the production of type I interferon (IFN-alpha and IFN-beta).</text>
</comment>
<comment type="subunit">
    <text evidence="1">Homodimer. Homooligomer. Interacts with host RB1; this interaction induces dissociation of RB1-E2F1 complex thereby disrupting RB1 activity. Interacts with host EP300; this interaction represses EP300 transcriptional activity. Interacts with protein E2; this interaction inhibits E7 oncogenic activity. Interacts with host TMEM173/STING; this interaction impairs the ability of TMEM173/STING to sense cytosolic DNA and promote the production of type I interferon (IFN-alpha and IFN-beta).</text>
</comment>
<comment type="subcellular location">
    <subcellularLocation>
        <location evidence="1">Host cytoplasm</location>
    </subcellularLocation>
    <subcellularLocation>
        <location evidence="1">Host nucleus</location>
    </subcellularLocation>
    <text evidence="1">Predominantly found in the host nucleus.</text>
</comment>
<comment type="domain">
    <text evidence="1">The E7 terminal domain is an intrinsically disordered domain, whose flexibility and conformational transitions confer target adaptability to the oncoprotein. It allows adaptation to a variety of protein targets and exposes the PEST degradation sequence that regulates its turnover in the cell.</text>
</comment>
<comment type="PTM">
    <text evidence="1">Highly phosphorylated.</text>
</comment>
<comment type="similarity">
    <text evidence="1">Belongs to the papillomaviridae E7 protein family.</text>
</comment>
<reference key="1">
    <citation type="journal article" date="1994" name="Curr. Top. Microbiol. Immunol.">
        <title>Primer-directed sequencing of human papillomavirus types.</title>
        <authorList>
            <person name="Delius H."/>
            <person name="Hofmann B."/>
        </authorList>
    </citation>
    <scope>NUCLEOTIDE SEQUENCE [GENOMIC DNA]</scope>
</reference>
<reference key="2">
    <citation type="journal article" date="1991" name="Int. J. Cancer">
        <title>Cloning and characterization of human papillomavirus type 52 from cervical carcinoma in Indonesia.</title>
        <authorList>
            <person name="Takami Y."/>
            <person name="Kondoh G."/>
            <person name="Saito J."/>
            <person name="Noda K."/>
            <person name="Sudiro T.M."/>
            <person name="Sjahrurachman A."/>
            <person name="Warsa U.C."/>
            <person name="Yutsudo M."/>
            <person name="Hakura A."/>
        </authorList>
    </citation>
    <scope>NUCLEOTIDE SEQUENCE [GENOMIC DNA]</scope>
</reference>
<reference key="3">
    <citation type="journal article" date="2002" name="Rev. Med. Virol.">
        <title>Interactions of SV40 large T antigen and other viral proteins with retinoblastoma tumour suppressor.</title>
        <authorList>
            <person name="Lee C."/>
            <person name="Cho Y."/>
        </authorList>
    </citation>
    <scope>REVIEW</scope>
</reference>
<organism>
    <name type="scientific">Human papillomavirus 52</name>
    <dbReference type="NCBI Taxonomy" id="10618"/>
    <lineage>
        <taxon>Viruses</taxon>
        <taxon>Monodnaviria</taxon>
        <taxon>Shotokuvirae</taxon>
        <taxon>Cossaviricota</taxon>
        <taxon>Papovaviricetes</taxon>
        <taxon>Zurhausenvirales</taxon>
        <taxon>Papillomaviridae</taxon>
        <taxon>Firstpapillomavirinae</taxon>
        <taxon>Alphapapillomavirus</taxon>
        <taxon>Alphapapillomavirus 9</taxon>
    </lineage>
</organism>
<organismHost>
    <name type="scientific">Homo sapiens</name>
    <name type="common">Human</name>
    <dbReference type="NCBI Taxonomy" id="9606"/>
</organismHost>